<proteinExistence type="inferred from homology"/>
<organism>
    <name type="scientific">Stutzerimonas stutzeri (strain A1501)</name>
    <name type="common">Pseudomonas stutzeri</name>
    <dbReference type="NCBI Taxonomy" id="379731"/>
    <lineage>
        <taxon>Bacteria</taxon>
        <taxon>Pseudomonadati</taxon>
        <taxon>Pseudomonadota</taxon>
        <taxon>Gammaproteobacteria</taxon>
        <taxon>Pseudomonadales</taxon>
        <taxon>Pseudomonadaceae</taxon>
        <taxon>Stutzerimonas</taxon>
    </lineage>
</organism>
<protein>
    <recommendedName>
        <fullName evidence="1">Aspartate carbamoyltransferase catalytic subunit</fullName>
        <ecNumber evidence="1">2.1.3.2</ecNumber>
    </recommendedName>
    <alternativeName>
        <fullName evidence="1">Aspartate transcarbamylase</fullName>
        <shortName evidence="1">ATCase</shortName>
    </alternativeName>
</protein>
<reference key="1">
    <citation type="journal article" date="2008" name="Proc. Natl. Acad. Sci. U.S.A.">
        <title>Nitrogen fixation island and rhizosphere competence traits in the genome of root-associated Pseudomonas stutzeri A1501.</title>
        <authorList>
            <person name="Yan Y."/>
            <person name="Yang J."/>
            <person name="Dou Y."/>
            <person name="Chen M."/>
            <person name="Ping S."/>
            <person name="Peng J."/>
            <person name="Lu W."/>
            <person name="Zhang W."/>
            <person name="Yao Z."/>
            <person name="Li H."/>
            <person name="Liu W."/>
            <person name="He S."/>
            <person name="Geng L."/>
            <person name="Zhang X."/>
            <person name="Yang F."/>
            <person name="Yu H."/>
            <person name="Zhan Y."/>
            <person name="Li D."/>
            <person name="Lin Z."/>
            <person name="Wang Y."/>
            <person name="Elmerich C."/>
            <person name="Lin M."/>
            <person name="Jin Q."/>
        </authorList>
    </citation>
    <scope>NUCLEOTIDE SEQUENCE [LARGE SCALE GENOMIC DNA]</scope>
    <source>
        <strain>A1501</strain>
    </source>
</reference>
<dbReference type="EC" id="2.1.3.2" evidence="1"/>
<dbReference type="EMBL" id="CP000304">
    <property type="protein sequence ID" value="ABP81582.1"/>
    <property type="molecule type" value="Genomic_DNA"/>
</dbReference>
<dbReference type="RefSeq" id="WP_011914964.1">
    <property type="nucleotide sequence ID" value="NC_009434.1"/>
</dbReference>
<dbReference type="SMR" id="A4VRI1"/>
<dbReference type="KEGG" id="psa:PST_3959"/>
<dbReference type="eggNOG" id="COG0540">
    <property type="taxonomic scope" value="Bacteria"/>
</dbReference>
<dbReference type="HOGENOM" id="CLU_043846_2_0_6"/>
<dbReference type="UniPathway" id="UPA00070">
    <property type="reaction ID" value="UER00116"/>
</dbReference>
<dbReference type="Proteomes" id="UP000000233">
    <property type="component" value="Chromosome"/>
</dbReference>
<dbReference type="GO" id="GO:0005829">
    <property type="term" value="C:cytosol"/>
    <property type="evidence" value="ECO:0007669"/>
    <property type="project" value="TreeGrafter"/>
</dbReference>
<dbReference type="GO" id="GO:0016597">
    <property type="term" value="F:amino acid binding"/>
    <property type="evidence" value="ECO:0007669"/>
    <property type="project" value="InterPro"/>
</dbReference>
<dbReference type="GO" id="GO:0004070">
    <property type="term" value="F:aspartate carbamoyltransferase activity"/>
    <property type="evidence" value="ECO:0007669"/>
    <property type="project" value="UniProtKB-UniRule"/>
</dbReference>
<dbReference type="GO" id="GO:0006207">
    <property type="term" value="P:'de novo' pyrimidine nucleobase biosynthetic process"/>
    <property type="evidence" value="ECO:0007669"/>
    <property type="project" value="InterPro"/>
</dbReference>
<dbReference type="GO" id="GO:0044205">
    <property type="term" value="P:'de novo' UMP biosynthetic process"/>
    <property type="evidence" value="ECO:0007669"/>
    <property type="project" value="UniProtKB-UniRule"/>
</dbReference>
<dbReference type="GO" id="GO:0006520">
    <property type="term" value="P:amino acid metabolic process"/>
    <property type="evidence" value="ECO:0007669"/>
    <property type="project" value="InterPro"/>
</dbReference>
<dbReference type="FunFam" id="3.40.50.1370:FF:000006">
    <property type="entry name" value="Aspartate carbamoyltransferase"/>
    <property type="match status" value="1"/>
</dbReference>
<dbReference type="FunFam" id="3.40.50.1370:FF:000007">
    <property type="entry name" value="Aspartate carbamoyltransferase"/>
    <property type="match status" value="1"/>
</dbReference>
<dbReference type="Gene3D" id="3.40.50.1370">
    <property type="entry name" value="Aspartate/ornithine carbamoyltransferase"/>
    <property type="match status" value="2"/>
</dbReference>
<dbReference type="HAMAP" id="MF_00001">
    <property type="entry name" value="Asp_carb_tr"/>
    <property type="match status" value="1"/>
</dbReference>
<dbReference type="InterPro" id="IPR006132">
    <property type="entry name" value="Asp/Orn_carbamoyltranf_P-bd"/>
</dbReference>
<dbReference type="InterPro" id="IPR006130">
    <property type="entry name" value="Asp/Orn_carbamoylTrfase"/>
</dbReference>
<dbReference type="InterPro" id="IPR036901">
    <property type="entry name" value="Asp/Orn_carbamoylTrfase_sf"/>
</dbReference>
<dbReference type="InterPro" id="IPR002082">
    <property type="entry name" value="Asp_carbamoyltransf"/>
</dbReference>
<dbReference type="InterPro" id="IPR006131">
    <property type="entry name" value="Asp_carbamoyltransf_Asp/Orn-bd"/>
</dbReference>
<dbReference type="NCBIfam" id="TIGR00670">
    <property type="entry name" value="asp_carb_tr"/>
    <property type="match status" value="1"/>
</dbReference>
<dbReference type="NCBIfam" id="NF002032">
    <property type="entry name" value="PRK00856.1"/>
    <property type="match status" value="1"/>
</dbReference>
<dbReference type="PANTHER" id="PTHR45753:SF6">
    <property type="entry name" value="ASPARTATE CARBAMOYLTRANSFERASE"/>
    <property type="match status" value="1"/>
</dbReference>
<dbReference type="PANTHER" id="PTHR45753">
    <property type="entry name" value="ORNITHINE CARBAMOYLTRANSFERASE, MITOCHONDRIAL"/>
    <property type="match status" value="1"/>
</dbReference>
<dbReference type="Pfam" id="PF00185">
    <property type="entry name" value="OTCace"/>
    <property type="match status" value="1"/>
</dbReference>
<dbReference type="Pfam" id="PF02729">
    <property type="entry name" value="OTCace_N"/>
    <property type="match status" value="1"/>
</dbReference>
<dbReference type="PRINTS" id="PR00100">
    <property type="entry name" value="AOTCASE"/>
</dbReference>
<dbReference type="PRINTS" id="PR00101">
    <property type="entry name" value="ATCASE"/>
</dbReference>
<dbReference type="SUPFAM" id="SSF53671">
    <property type="entry name" value="Aspartate/ornithine carbamoyltransferase"/>
    <property type="match status" value="1"/>
</dbReference>
<dbReference type="PROSITE" id="PS00097">
    <property type="entry name" value="CARBAMOYLTRANSFERASE"/>
    <property type="match status" value="1"/>
</dbReference>
<evidence type="ECO:0000255" key="1">
    <source>
        <dbReference type="HAMAP-Rule" id="MF_00001"/>
    </source>
</evidence>
<comment type="function">
    <text evidence="1">Catalyzes the condensation of carbamoyl phosphate and aspartate to form carbamoyl aspartate and inorganic phosphate, the committed step in the de novo pyrimidine nucleotide biosynthesis pathway.</text>
</comment>
<comment type="catalytic activity">
    <reaction evidence="1">
        <text>carbamoyl phosphate + L-aspartate = N-carbamoyl-L-aspartate + phosphate + H(+)</text>
        <dbReference type="Rhea" id="RHEA:20013"/>
        <dbReference type="ChEBI" id="CHEBI:15378"/>
        <dbReference type="ChEBI" id="CHEBI:29991"/>
        <dbReference type="ChEBI" id="CHEBI:32814"/>
        <dbReference type="ChEBI" id="CHEBI:43474"/>
        <dbReference type="ChEBI" id="CHEBI:58228"/>
        <dbReference type="EC" id="2.1.3.2"/>
    </reaction>
</comment>
<comment type="pathway">
    <text evidence="1">Pyrimidine metabolism; UMP biosynthesis via de novo pathway; (S)-dihydroorotate from bicarbonate: step 2/3.</text>
</comment>
<comment type="subunit">
    <text evidence="1">Heterododecamer (2C3:3R2) of six catalytic PyrB chains organized as two trimers (C3), and six regulatory PyrI chains organized as three dimers (R2).</text>
</comment>
<comment type="similarity">
    <text evidence="1">Belongs to the aspartate/ornithine carbamoyltransferase superfamily. ATCase family.</text>
</comment>
<name>PYRB_STUS1</name>
<keyword id="KW-0665">Pyrimidine biosynthesis</keyword>
<keyword id="KW-1185">Reference proteome</keyword>
<keyword id="KW-0808">Transferase</keyword>
<sequence length="338" mass="37008">MTPTDAKRPLQLNDQGQLRHFLSLDGLPRELLTEILDTADSFLEVGARAVKKVPLLRGKTVCNVFFENSTRTRTTFELAAKRLSADVITLNVSTSSTSKGETLTDTLRNLEAMAADMFVVRHADSGAAHFIAEHVSPDVAVINGGDGRHAHPTQGMLDMLTIRRHKGSFDNLSVAIVGDILHSRVARSNMLALRTLGCPDIRVIAPKTLLPEGIEQYGVRVFTDMNEGLRDVDVVIMLRLQRERMQGGLLPSEGEFYKLYGLTTQRLALARPDAIVMHPGPINRGVEIESAVADGPQSVILNQVTYGIAIRMAVLSMAMSGQTAQRQIDSESVSEEQQ</sequence>
<accession>A4VRI1</accession>
<gene>
    <name evidence="1" type="primary">pyrB</name>
    <name type="ordered locus">PST_3959</name>
</gene>
<feature type="chain" id="PRO_0000321142" description="Aspartate carbamoyltransferase catalytic subunit">
    <location>
        <begin position="1"/>
        <end position="338"/>
    </location>
</feature>
<feature type="binding site" evidence="1">
    <location>
        <position position="71"/>
    </location>
    <ligand>
        <name>carbamoyl phosphate</name>
        <dbReference type="ChEBI" id="CHEBI:58228"/>
    </ligand>
</feature>
<feature type="binding site" evidence="1">
    <location>
        <position position="72"/>
    </location>
    <ligand>
        <name>carbamoyl phosphate</name>
        <dbReference type="ChEBI" id="CHEBI:58228"/>
    </ligand>
</feature>
<feature type="binding site" evidence="1">
    <location>
        <position position="99"/>
    </location>
    <ligand>
        <name>L-aspartate</name>
        <dbReference type="ChEBI" id="CHEBI:29991"/>
    </ligand>
</feature>
<feature type="binding site" evidence="1">
    <location>
        <position position="121"/>
    </location>
    <ligand>
        <name>carbamoyl phosphate</name>
        <dbReference type="ChEBI" id="CHEBI:58228"/>
    </ligand>
</feature>
<feature type="binding site" evidence="1">
    <location>
        <position position="151"/>
    </location>
    <ligand>
        <name>carbamoyl phosphate</name>
        <dbReference type="ChEBI" id="CHEBI:58228"/>
    </ligand>
</feature>
<feature type="binding site" evidence="1">
    <location>
        <position position="154"/>
    </location>
    <ligand>
        <name>carbamoyl phosphate</name>
        <dbReference type="ChEBI" id="CHEBI:58228"/>
    </ligand>
</feature>
<feature type="binding site" evidence="1">
    <location>
        <position position="184"/>
    </location>
    <ligand>
        <name>L-aspartate</name>
        <dbReference type="ChEBI" id="CHEBI:29991"/>
    </ligand>
</feature>
<feature type="binding site" evidence="1">
    <location>
        <position position="239"/>
    </location>
    <ligand>
        <name>L-aspartate</name>
        <dbReference type="ChEBI" id="CHEBI:29991"/>
    </ligand>
</feature>
<feature type="binding site" evidence="1">
    <location>
        <position position="280"/>
    </location>
    <ligand>
        <name>carbamoyl phosphate</name>
        <dbReference type="ChEBI" id="CHEBI:58228"/>
    </ligand>
</feature>
<feature type="binding site" evidence="1">
    <location>
        <position position="281"/>
    </location>
    <ligand>
        <name>carbamoyl phosphate</name>
        <dbReference type="ChEBI" id="CHEBI:58228"/>
    </ligand>
</feature>